<dbReference type="EMBL" id="CP001140">
    <property type="protein sequence ID" value="ACL11251.1"/>
    <property type="molecule type" value="Genomic_DNA"/>
</dbReference>
<dbReference type="RefSeq" id="WP_012608592.1">
    <property type="nucleotide sequence ID" value="NC_011766.1"/>
</dbReference>
<dbReference type="SMR" id="B8D570"/>
<dbReference type="STRING" id="490899.DKAM_0925"/>
<dbReference type="GeneID" id="7171056"/>
<dbReference type="KEGG" id="dka:DKAM_0925"/>
<dbReference type="eggNOG" id="arCOG01217">
    <property type="taxonomic scope" value="Archaea"/>
</dbReference>
<dbReference type="HOGENOM" id="CLU_169299_1_0_2"/>
<dbReference type="Proteomes" id="UP000006903">
    <property type="component" value="Chromosome"/>
</dbReference>
<dbReference type="GO" id="GO:0048500">
    <property type="term" value="C:signal recognition particle"/>
    <property type="evidence" value="ECO:0007669"/>
    <property type="project" value="UniProtKB-UniRule"/>
</dbReference>
<dbReference type="GO" id="GO:0008312">
    <property type="term" value="F:7S RNA binding"/>
    <property type="evidence" value="ECO:0007669"/>
    <property type="project" value="UniProtKB-UniRule"/>
</dbReference>
<dbReference type="GO" id="GO:0006617">
    <property type="term" value="P:SRP-dependent cotranslational protein targeting to membrane, signal sequence recognition"/>
    <property type="evidence" value="ECO:0007669"/>
    <property type="project" value="TreeGrafter"/>
</dbReference>
<dbReference type="Gene3D" id="3.30.56.30">
    <property type="entry name" value="Signal recognition particle, SRP19-like subunit"/>
    <property type="match status" value="1"/>
</dbReference>
<dbReference type="HAMAP" id="MF_00305">
    <property type="entry name" value="SRP19"/>
    <property type="match status" value="1"/>
</dbReference>
<dbReference type="InterPro" id="IPR002778">
    <property type="entry name" value="Signal_recog_particle_SRP19"/>
</dbReference>
<dbReference type="InterPro" id="IPR036521">
    <property type="entry name" value="SRP19-like_sf"/>
</dbReference>
<dbReference type="InterPro" id="IPR022938">
    <property type="entry name" value="SRP19_arc-type"/>
</dbReference>
<dbReference type="NCBIfam" id="NF001973">
    <property type="entry name" value="PRK00754.1"/>
    <property type="match status" value="1"/>
</dbReference>
<dbReference type="PANTHER" id="PTHR17453">
    <property type="entry name" value="SIGNAL RECOGNITION PARTICLE 19 KD PROTEIN"/>
    <property type="match status" value="1"/>
</dbReference>
<dbReference type="PANTHER" id="PTHR17453:SF0">
    <property type="entry name" value="SIGNAL RECOGNITION PARTICLE 19 KDA PROTEIN"/>
    <property type="match status" value="1"/>
</dbReference>
<dbReference type="Pfam" id="PF01922">
    <property type="entry name" value="SRP19"/>
    <property type="match status" value="1"/>
</dbReference>
<dbReference type="SUPFAM" id="SSF69695">
    <property type="entry name" value="SRP19"/>
    <property type="match status" value="1"/>
</dbReference>
<reference key="1">
    <citation type="journal article" date="2009" name="J. Bacteriol.">
        <title>Complete genome sequence of the anaerobic, protein-degrading hyperthermophilic crenarchaeon Desulfurococcus kamchatkensis.</title>
        <authorList>
            <person name="Ravin N.V."/>
            <person name="Mardanov A.V."/>
            <person name="Beletsky A.V."/>
            <person name="Kublanov I.V."/>
            <person name="Kolganova T.V."/>
            <person name="Lebedinsky A.V."/>
            <person name="Chernyh N.A."/>
            <person name="Bonch-Osmolovskaya E.A."/>
            <person name="Skryabin K.G."/>
        </authorList>
    </citation>
    <scope>NUCLEOTIDE SEQUENCE [LARGE SCALE GENOMIC DNA]</scope>
    <source>
        <strain>DSM 18924 / JCM 16383 / VKM B-2413 / 1221n</strain>
    </source>
</reference>
<accession>B8D570</accession>
<gene>
    <name evidence="1" type="primary">srp19</name>
    <name type="ordered locus">DKAM_0925</name>
</gene>
<evidence type="ECO:0000255" key="1">
    <source>
        <dbReference type="HAMAP-Rule" id="MF_00305"/>
    </source>
</evidence>
<proteinExistence type="inferred from homology"/>
<organism>
    <name type="scientific">Desulfurococcus amylolyticus (strain DSM 18924 / JCM 16383 / VKM B-2413 / 1221n)</name>
    <name type="common">Desulfurococcus kamchatkensis</name>
    <dbReference type="NCBI Taxonomy" id="490899"/>
    <lineage>
        <taxon>Archaea</taxon>
        <taxon>Thermoproteota</taxon>
        <taxon>Thermoprotei</taxon>
        <taxon>Desulfurococcales</taxon>
        <taxon>Desulfurococcaceae</taxon>
        <taxon>Desulfurococcus</taxon>
    </lineage>
</organism>
<name>SRP19_DESA1</name>
<sequence>MSRDNKGRRIVVYPAYIDSKKSRSEGRKISLGKAVPNPSIKEIIEASERLGLNPLYEEKHYPRLKEGKGRVLVDKKSGKLEILRMIADEIRKMRG</sequence>
<feature type="chain" id="PRO_1000196542" description="Signal recognition particle 19 kDa protein">
    <location>
        <begin position="1"/>
        <end position="95"/>
    </location>
</feature>
<keyword id="KW-0963">Cytoplasm</keyword>
<keyword id="KW-0687">Ribonucleoprotein</keyword>
<keyword id="KW-0694">RNA-binding</keyword>
<keyword id="KW-0733">Signal recognition particle</keyword>
<protein>
    <recommendedName>
        <fullName evidence="1">Signal recognition particle 19 kDa protein</fullName>
        <shortName evidence="1">SRP19</shortName>
    </recommendedName>
</protein>
<comment type="function">
    <text evidence="1">Involved in targeting and insertion of nascent membrane proteins into the cytoplasmic membrane. Binds directly to 7S RNA and mediates binding of the 54 kDa subunit of the SRP.</text>
</comment>
<comment type="subunit">
    <text evidence="1">Part of the signal recognition particle protein translocation system, which is composed of SRP and FtsY. Archaeal SRP consists of a 7S RNA molecule of 300 nucleotides and two protein subunits: SRP54 and SRP19.</text>
</comment>
<comment type="subcellular location">
    <subcellularLocation>
        <location evidence="1">Cytoplasm</location>
    </subcellularLocation>
</comment>
<comment type="similarity">
    <text evidence="1">Belongs to the SRP19 family.</text>
</comment>